<organism>
    <name type="scientific">Anaeromyxobacter dehalogenans (strain 2CP-C)</name>
    <dbReference type="NCBI Taxonomy" id="290397"/>
    <lineage>
        <taxon>Bacteria</taxon>
        <taxon>Pseudomonadati</taxon>
        <taxon>Myxococcota</taxon>
        <taxon>Myxococcia</taxon>
        <taxon>Myxococcales</taxon>
        <taxon>Cystobacterineae</taxon>
        <taxon>Anaeromyxobacteraceae</taxon>
        <taxon>Anaeromyxobacter</taxon>
    </lineage>
</organism>
<sequence length="270" mass="27724">MTKVVVTGAAGRMGTQIVRLVRATPGLSVSGAVERAGSPAIGKDAGTLAGGEPLGVAVVDDLAKALPGADVVIDFTSHEASVRHAQACAAAGVALVIGSTGFTPDAKAKVAEAARKVPVVLSPNMSVGVNVVFELVRQAARVLGDAYDVEVVEIHHKHKRDAPSGTAVRLGEVAAEALGRAPADALAYSRHGILGERPPWQIGIQTLRGGDVVGEHTVFFCGEGERVEITHRATSREQFARGAARAAAWLPGKAPGVYDMADVLGLRGGK</sequence>
<keyword id="KW-0028">Amino-acid biosynthesis</keyword>
<keyword id="KW-0963">Cytoplasm</keyword>
<keyword id="KW-0220">Diaminopimelate biosynthesis</keyword>
<keyword id="KW-0457">Lysine biosynthesis</keyword>
<keyword id="KW-0520">NAD</keyword>
<keyword id="KW-0521">NADP</keyword>
<keyword id="KW-0560">Oxidoreductase</keyword>
<keyword id="KW-1185">Reference proteome</keyword>
<feature type="chain" id="PRO_1000008532" description="4-hydroxy-tetrahydrodipicolinate reductase">
    <location>
        <begin position="1"/>
        <end position="270"/>
    </location>
</feature>
<feature type="active site" description="Proton donor/acceptor" evidence="1">
    <location>
        <position position="155"/>
    </location>
</feature>
<feature type="active site" description="Proton donor" evidence="1">
    <location>
        <position position="159"/>
    </location>
</feature>
<feature type="binding site" evidence="1">
    <location>
        <begin position="8"/>
        <end position="13"/>
    </location>
    <ligand>
        <name>NAD(+)</name>
        <dbReference type="ChEBI" id="CHEBI:57540"/>
    </ligand>
</feature>
<feature type="binding site" evidence="1">
    <location>
        <position position="34"/>
    </location>
    <ligand>
        <name>NAD(+)</name>
        <dbReference type="ChEBI" id="CHEBI:57540"/>
    </ligand>
</feature>
<feature type="binding site" evidence="1">
    <location>
        <position position="35"/>
    </location>
    <ligand>
        <name>NADP(+)</name>
        <dbReference type="ChEBI" id="CHEBI:58349"/>
    </ligand>
</feature>
<feature type="binding site" evidence="1">
    <location>
        <begin position="98"/>
        <end position="100"/>
    </location>
    <ligand>
        <name>NAD(+)</name>
        <dbReference type="ChEBI" id="CHEBI:57540"/>
    </ligand>
</feature>
<feature type="binding site" evidence="1">
    <location>
        <begin position="122"/>
        <end position="125"/>
    </location>
    <ligand>
        <name>NAD(+)</name>
        <dbReference type="ChEBI" id="CHEBI:57540"/>
    </ligand>
</feature>
<feature type="binding site" evidence="1">
    <location>
        <position position="156"/>
    </location>
    <ligand>
        <name>(S)-2,3,4,5-tetrahydrodipicolinate</name>
        <dbReference type="ChEBI" id="CHEBI:16845"/>
    </ligand>
</feature>
<feature type="binding site" evidence="1">
    <location>
        <begin position="165"/>
        <end position="166"/>
    </location>
    <ligand>
        <name>(S)-2,3,4,5-tetrahydrodipicolinate</name>
        <dbReference type="ChEBI" id="CHEBI:16845"/>
    </ligand>
</feature>
<protein>
    <recommendedName>
        <fullName evidence="1">4-hydroxy-tetrahydrodipicolinate reductase</fullName>
        <shortName evidence="1">HTPA reductase</shortName>
        <ecNumber evidence="1">1.17.1.8</ecNumber>
    </recommendedName>
</protein>
<evidence type="ECO:0000255" key="1">
    <source>
        <dbReference type="HAMAP-Rule" id="MF_00102"/>
    </source>
</evidence>
<evidence type="ECO:0000305" key="2"/>
<reference key="1">
    <citation type="submission" date="2006-01" db="EMBL/GenBank/DDBJ databases">
        <title>Complete sequence of Anaeromyxobacter dehalogenans 2CP-C.</title>
        <authorList>
            <person name="Copeland A."/>
            <person name="Lucas S."/>
            <person name="Lapidus A."/>
            <person name="Barry K."/>
            <person name="Detter J.C."/>
            <person name="Glavina T."/>
            <person name="Hammon N."/>
            <person name="Israni S."/>
            <person name="Pitluck S."/>
            <person name="Brettin T."/>
            <person name="Bruce D."/>
            <person name="Han C."/>
            <person name="Tapia R."/>
            <person name="Gilna P."/>
            <person name="Kiss H."/>
            <person name="Schmutz J."/>
            <person name="Larimer F."/>
            <person name="Land M."/>
            <person name="Kyrpides N."/>
            <person name="Anderson I."/>
            <person name="Sanford R.A."/>
            <person name="Ritalahti K.M."/>
            <person name="Thomas H.S."/>
            <person name="Kirby J.R."/>
            <person name="Zhulin I.B."/>
            <person name="Loeffler F.E."/>
            <person name="Richardson P."/>
        </authorList>
    </citation>
    <scope>NUCLEOTIDE SEQUENCE [LARGE SCALE GENOMIC DNA]</scope>
    <source>
        <strain>2CP-C</strain>
    </source>
</reference>
<dbReference type="EC" id="1.17.1.8" evidence="1"/>
<dbReference type="EMBL" id="CP000251">
    <property type="protein sequence ID" value="ABC83832.1"/>
    <property type="molecule type" value="Genomic_DNA"/>
</dbReference>
<dbReference type="RefSeq" id="WP_011423114.1">
    <property type="nucleotide sequence ID" value="NC_007760.1"/>
</dbReference>
<dbReference type="SMR" id="Q2IGX0"/>
<dbReference type="STRING" id="290397.Adeh_4068"/>
<dbReference type="KEGG" id="ade:Adeh_4068"/>
<dbReference type="eggNOG" id="COG0289">
    <property type="taxonomic scope" value="Bacteria"/>
</dbReference>
<dbReference type="HOGENOM" id="CLU_047479_2_1_7"/>
<dbReference type="OrthoDB" id="9790352at2"/>
<dbReference type="UniPathway" id="UPA00034">
    <property type="reaction ID" value="UER00018"/>
</dbReference>
<dbReference type="Proteomes" id="UP000001935">
    <property type="component" value="Chromosome"/>
</dbReference>
<dbReference type="GO" id="GO:0005829">
    <property type="term" value="C:cytosol"/>
    <property type="evidence" value="ECO:0007669"/>
    <property type="project" value="TreeGrafter"/>
</dbReference>
<dbReference type="GO" id="GO:0008839">
    <property type="term" value="F:4-hydroxy-tetrahydrodipicolinate reductase"/>
    <property type="evidence" value="ECO:0007669"/>
    <property type="project" value="UniProtKB-EC"/>
</dbReference>
<dbReference type="GO" id="GO:0051287">
    <property type="term" value="F:NAD binding"/>
    <property type="evidence" value="ECO:0007669"/>
    <property type="project" value="UniProtKB-UniRule"/>
</dbReference>
<dbReference type="GO" id="GO:0050661">
    <property type="term" value="F:NADP binding"/>
    <property type="evidence" value="ECO:0007669"/>
    <property type="project" value="UniProtKB-UniRule"/>
</dbReference>
<dbReference type="GO" id="GO:0016726">
    <property type="term" value="F:oxidoreductase activity, acting on CH or CH2 groups, NAD or NADP as acceptor"/>
    <property type="evidence" value="ECO:0007669"/>
    <property type="project" value="UniProtKB-UniRule"/>
</dbReference>
<dbReference type="GO" id="GO:0019877">
    <property type="term" value="P:diaminopimelate biosynthetic process"/>
    <property type="evidence" value="ECO:0007669"/>
    <property type="project" value="UniProtKB-UniRule"/>
</dbReference>
<dbReference type="GO" id="GO:0009089">
    <property type="term" value="P:lysine biosynthetic process via diaminopimelate"/>
    <property type="evidence" value="ECO:0007669"/>
    <property type="project" value="UniProtKB-UniRule"/>
</dbReference>
<dbReference type="CDD" id="cd02274">
    <property type="entry name" value="DHDPR_N"/>
    <property type="match status" value="1"/>
</dbReference>
<dbReference type="FunFam" id="3.30.360.10:FF:000004">
    <property type="entry name" value="4-hydroxy-tetrahydrodipicolinate reductase"/>
    <property type="match status" value="1"/>
</dbReference>
<dbReference type="Gene3D" id="3.30.360.10">
    <property type="entry name" value="Dihydrodipicolinate Reductase, domain 2"/>
    <property type="match status" value="1"/>
</dbReference>
<dbReference type="Gene3D" id="3.40.50.720">
    <property type="entry name" value="NAD(P)-binding Rossmann-like Domain"/>
    <property type="match status" value="1"/>
</dbReference>
<dbReference type="HAMAP" id="MF_00102">
    <property type="entry name" value="DapB"/>
    <property type="match status" value="1"/>
</dbReference>
<dbReference type="InterPro" id="IPR022663">
    <property type="entry name" value="DapB_C"/>
</dbReference>
<dbReference type="InterPro" id="IPR000846">
    <property type="entry name" value="DapB_N"/>
</dbReference>
<dbReference type="InterPro" id="IPR022664">
    <property type="entry name" value="DapB_N_CS"/>
</dbReference>
<dbReference type="InterPro" id="IPR023940">
    <property type="entry name" value="DHDPR_bac"/>
</dbReference>
<dbReference type="InterPro" id="IPR036291">
    <property type="entry name" value="NAD(P)-bd_dom_sf"/>
</dbReference>
<dbReference type="NCBIfam" id="TIGR00036">
    <property type="entry name" value="dapB"/>
    <property type="match status" value="1"/>
</dbReference>
<dbReference type="PANTHER" id="PTHR20836:SF0">
    <property type="entry name" value="4-HYDROXY-TETRAHYDRODIPICOLINATE REDUCTASE 1, CHLOROPLASTIC-RELATED"/>
    <property type="match status" value="1"/>
</dbReference>
<dbReference type="PANTHER" id="PTHR20836">
    <property type="entry name" value="DIHYDRODIPICOLINATE REDUCTASE"/>
    <property type="match status" value="1"/>
</dbReference>
<dbReference type="Pfam" id="PF05173">
    <property type="entry name" value="DapB_C"/>
    <property type="match status" value="1"/>
</dbReference>
<dbReference type="Pfam" id="PF01113">
    <property type="entry name" value="DapB_N"/>
    <property type="match status" value="1"/>
</dbReference>
<dbReference type="PIRSF" id="PIRSF000161">
    <property type="entry name" value="DHPR"/>
    <property type="match status" value="1"/>
</dbReference>
<dbReference type="SUPFAM" id="SSF55347">
    <property type="entry name" value="Glyceraldehyde-3-phosphate dehydrogenase-like, C-terminal domain"/>
    <property type="match status" value="1"/>
</dbReference>
<dbReference type="SUPFAM" id="SSF51735">
    <property type="entry name" value="NAD(P)-binding Rossmann-fold domains"/>
    <property type="match status" value="1"/>
</dbReference>
<dbReference type="PROSITE" id="PS01298">
    <property type="entry name" value="DAPB"/>
    <property type="match status" value="1"/>
</dbReference>
<proteinExistence type="inferred from homology"/>
<comment type="function">
    <text evidence="1">Catalyzes the conversion of 4-hydroxy-tetrahydrodipicolinate (HTPA) to tetrahydrodipicolinate.</text>
</comment>
<comment type="catalytic activity">
    <reaction evidence="1">
        <text>(S)-2,3,4,5-tetrahydrodipicolinate + NAD(+) + H2O = (2S,4S)-4-hydroxy-2,3,4,5-tetrahydrodipicolinate + NADH + H(+)</text>
        <dbReference type="Rhea" id="RHEA:35323"/>
        <dbReference type="ChEBI" id="CHEBI:15377"/>
        <dbReference type="ChEBI" id="CHEBI:15378"/>
        <dbReference type="ChEBI" id="CHEBI:16845"/>
        <dbReference type="ChEBI" id="CHEBI:57540"/>
        <dbReference type="ChEBI" id="CHEBI:57945"/>
        <dbReference type="ChEBI" id="CHEBI:67139"/>
        <dbReference type="EC" id="1.17.1.8"/>
    </reaction>
</comment>
<comment type="catalytic activity">
    <reaction evidence="1">
        <text>(S)-2,3,4,5-tetrahydrodipicolinate + NADP(+) + H2O = (2S,4S)-4-hydroxy-2,3,4,5-tetrahydrodipicolinate + NADPH + H(+)</text>
        <dbReference type="Rhea" id="RHEA:35331"/>
        <dbReference type="ChEBI" id="CHEBI:15377"/>
        <dbReference type="ChEBI" id="CHEBI:15378"/>
        <dbReference type="ChEBI" id="CHEBI:16845"/>
        <dbReference type="ChEBI" id="CHEBI:57783"/>
        <dbReference type="ChEBI" id="CHEBI:58349"/>
        <dbReference type="ChEBI" id="CHEBI:67139"/>
        <dbReference type="EC" id="1.17.1.8"/>
    </reaction>
</comment>
<comment type="pathway">
    <text evidence="1">Amino-acid biosynthesis; L-lysine biosynthesis via DAP pathway; (S)-tetrahydrodipicolinate from L-aspartate: step 4/4.</text>
</comment>
<comment type="subcellular location">
    <subcellularLocation>
        <location evidence="1">Cytoplasm</location>
    </subcellularLocation>
</comment>
<comment type="similarity">
    <text evidence="1">Belongs to the DapB family.</text>
</comment>
<comment type="caution">
    <text evidence="2">Was originally thought to be a dihydrodipicolinate reductase (DHDPR), catalyzing the conversion of dihydrodipicolinate to tetrahydrodipicolinate. However, it was shown in E.coli that the substrate of the enzymatic reaction is not dihydrodipicolinate (DHDP) but in fact (2S,4S)-4-hydroxy-2,3,4,5-tetrahydrodipicolinic acid (HTPA), the product released by the DapA-catalyzed reaction.</text>
</comment>
<gene>
    <name evidence="1" type="primary">dapB</name>
    <name type="ordered locus">Adeh_4068</name>
</gene>
<name>DAPB_ANADE</name>
<accession>Q2IGX0</accession>